<reference key="1">
    <citation type="journal article" date="2000" name="Biol. Reprod.">
        <title>Identification of INSL6, a new member of the insulin family that is expressed in the testis of the human and Rat.</title>
        <authorList>
            <person name="Lok S."/>
            <person name="Johnston D.S."/>
            <person name="Conklin D."/>
            <person name="Lofton-Day C.E."/>
            <person name="Adams R.L."/>
            <person name="Jelmberg A.C."/>
            <person name="Whitmore T.E."/>
            <person name="Schrader S."/>
            <person name="Griswold M.D."/>
            <person name="Jaspers S.R."/>
        </authorList>
    </citation>
    <scope>NUCLEOTIDE SEQUENCE [MRNA]</scope>
    <source>
        <tissue>Testis</tissue>
    </source>
</reference>
<dbReference type="EMBL" id="AF159506">
    <property type="protein sequence ID" value="AAD40956.1"/>
    <property type="molecule type" value="mRNA"/>
</dbReference>
<dbReference type="RefSeq" id="NP_072105.1">
    <property type="nucleotide sequence ID" value="NM_022583.1"/>
</dbReference>
<dbReference type="FunCoup" id="Q9WV41">
    <property type="interactions" value="26"/>
</dbReference>
<dbReference type="STRING" id="10116.ENSRNOP00000021298"/>
<dbReference type="iPTMnet" id="Q9WV41"/>
<dbReference type="PhosphoSitePlus" id="Q9WV41"/>
<dbReference type="PaxDb" id="10116-ENSRNOP00000021298"/>
<dbReference type="Ensembl" id="ENSRNOT00000021298.5">
    <property type="protein sequence ID" value="ENSRNOP00000021298.3"/>
    <property type="gene ID" value="ENSRNOG00000015868.5"/>
</dbReference>
<dbReference type="GeneID" id="50546"/>
<dbReference type="KEGG" id="rno:50546"/>
<dbReference type="AGR" id="RGD:62061"/>
<dbReference type="CTD" id="11172"/>
<dbReference type="RGD" id="62061">
    <property type="gene designation" value="Insl6"/>
</dbReference>
<dbReference type="eggNOG" id="ENOG502RWPT">
    <property type="taxonomic scope" value="Eukaryota"/>
</dbReference>
<dbReference type="GeneTree" id="ENSGT00940000154434"/>
<dbReference type="HOGENOM" id="CLU_1299356_0_0_1"/>
<dbReference type="InParanoid" id="Q9WV41"/>
<dbReference type="OMA" id="SIACFPY"/>
<dbReference type="OrthoDB" id="9659760at2759"/>
<dbReference type="PhylomeDB" id="Q9WV41"/>
<dbReference type="TreeFam" id="TF343788"/>
<dbReference type="PRO" id="PR:Q9WV41"/>
<dbReference type="Proteomes" id="UP000002494">
    <property type="component" value="Chromosome 1"/>
</dbReference>
<dbReference type="Bgee" id="ENSRNOG00000015868">
    <property type="expression patterns" value="Expressed in testis and 6 other cell types or tissues"/>
</dbReference>
<dbReference type="GO" id="GO:0005576">
    <property type="term" value="C:extracellular region"/>
    <property type="evidence" value="ECO:0007669"/>
    <property type="project" value="UniProtKB-SubCell"/>
</dbReference>
<dbReference type="GO" id="GO:0005179">
    <property type="term" value="F:hormone activity"/>
    <property type="evidence" value="ECO:0007669"/>
    <property type="project" value="UniProtKB-KW"/>
</dbReference>
<dbReference type="GO" id="GO:0006915">
    <property type="term" value="P:apoptotic process"/>
    <property type="evidence" value="ECO:0000266"/>
    <property type="project" value="RGD"/>
</dbReference>
<dbReference type="GO" id="GO:0035234">
    <property type="term" value="P:ectopic germ cell programmed cell death"/>
    <property type="evidence" value="ECO:0000266"/>
    <property type="project" value="RGD"/>
</dbReference>
<dbReference type="GO" id="GO:0009566">
    <property type="term" value="P:fertilization"/>
    <property type="evidence" value="ECO:0000266"/>
    <property type="project" value="RGD"/>
</dbReference>
<dbReference type="GO" id="GO:0030317">
    <property type="term" value="P:flagellated sperm motility"/>
    <property type="evidence" value="ECO:0000266"/>
    <property type="project" value="RGD"/>
</dbReference>
<dbReference type="GO" id="GO:0008584">
    <property type="term" value="P:male gonad development"/>
    <property type="evidence" value="ECO:0000266"/>
    <property type="project" value="RGD"/>
</dbReference>
<dbReference type="GO" id="GO:0043066">
    <property type="term" value="P:negative regulation of apoptotic process"/>
    <property type="evidence" value="ECO:0000266"/>
    <property type="project" value="RGD"/>
</dbReference>
<dbReference type="GO" id="GO:0051093">
    <property type="term" value="P:negative regulation of developmental process"/>
    <property type="evidence" value="ECO:0000266"/>
    <property type="project" value="RGD"/>
</dbReference>
<dbReference type="GO" id="GO:2000242">
    <property type="term" value="P:negative regulation of reproductive process"/>
    <property type="evidence" value="ECO:0000266"/>
    <property type="project" value="RGD"/>
</dbReference>
<dbReference type="GO" id="GO:0007286">
    <property type="term" value="P:spermatid development"/>
    <property type="evidence" value="ECO:0000266"/>
    <property type="project" value="RGD"/>
</dbReference>
<dbReference type="GO" id="GO:0007283">
    <property type="term" value="P:spermatogenesis"/>
    <property type="evidence" value="ECO:0000266"/>
    <property type="project" value="RGD"/>
</dbReference>
<dbReference type="CDD" id="cd04365">
    <property type="entry name" value="IlGF_relaxin_like"/>
    <property type="match status" value="1"/>
</dbReference>
<dbReference type="Gene3D" id="1.10.100.10">
    <property type="entry name" value="Insulin-like"/>
    <property type="match status" value="1"/>
</dbReference>
<dbReference type="InterPro" id="IPR016179">
    <property type="entry name" value="Insulin-like"/>
</dbReference>
<dbReference type="InterPro" id="IPR017100">
    <property type="entry name" value="Insulin-like_pep_6"/>
</dbReference>
<dbReference type="InterPro" id="IPR036438">
    <property type="entry name" value="Insulin-like_sf"/>
</dbReference>
<dbReference type="InterPro" id="IPR022353">
    <property type="entry name" value="Insulin_CS"/>
</dbReference>
<dbReference type="InterPro" id="IPR051042">
    <property type="entry name" value="Repro_Hormone_Insulin-like"/>
</dbReference>
<dbReference type="PANTHER" id="PTHR12004:SF1">
    <property type="entry name" value="INSULIN-LIKE PEPTIDE INSL6"/>
    <property type="match status" value="1"/>
</dbReference>
<dbReference type="PANTHER" id="PTHR12004">
    <property type="entry name" value="RELAXIN"/>
    <property type="match status" value="1"/>
</dbReference>
<dbReference type="Pfam" id="PF00049">
    <property type="entry name" value="Insulin"/>
    <property type="match status" value="1"/>
</dbReference>
<dbReference type="PIRSF" id="PIRSF037062">
    <property type="entry name" value="Insulin-like_peptide_6"/>
    <property type="match status" value="1"/>
</dbReference>
<dbReference type="SMART" id="SM00078">
    <property type="entry name" value="IlGF"/>
    <property type="match status" value="1"/>
</dbReference>
<dbReference type="SUPFAM" id="SSF56994">
    <property type="entry name" value="Insulin-like"/>
    <property type="match status" value="1"/>
</dbReference>
<dbReference type="PROSITE" id="PS00262">
    <property type="entry name" value="INSULIN"/>
    <property type="match status" value="1"/>
</dbReference>
<sequence>MKQLCCSCLLWLGLLLAPFSQEQEEVTSPTKLCGRDLLVEVIKLCGQNDWSRFSMEEQSPMTELVPQYTRKVKTFNPHRSSSSWGRFTNPGVSQKKATHTWESQSLPNYQLKKEELLPKTGVHSYHGGKPYVKSVKFQKKNTDKMSTFSGLFWGNHPQRKRRGFADKCCAIGCSKEELAVACLPFVDF</sequence>
<feature type="signal peptide" evidence="2">
    <location>
        <begin position="1"/>
        <end position="22"/>
    </location>
</feature>
<feature type="chain" id="PRO_0000016181" description="Insulin-like peptide INSL6">
    <location>
        <begin position="23"/>
        <end position="188"/>
    </location>
</feature>
<feature type="peptide" id="PRO_0000016182" description="Insulin-like peptide INSL6 B chain" evidence="2">
    <location>
        <begin position="23"/>
        <end position="51"/>
    </location>
</feature>
<feature type="propeptide" id="PRO_0000016183" description="Connecting peptide" evidence="2">
    <location>
        <begin position="53"/>
        <end position="158"/>
    </location>
</feature>
<feature type="peptide" id="PRO_0000016184" description="Insulin-like peptide INSL6 A chain" evidence="2">
    <location>
        <begin position="163"/>
        <end position="188"/>
    </location>
</feature>
<feature type="disulfide bond" evidence="1">
    <location>
        <begin position="33"/>
        <end position="169"/>
    </location>
</feature>
<feature type="disulfide bond" evidence="1">
    <location>
        <begin position="45"/>
        <end position="182"/>
    </location>
</feature>
<feature type="disulfide bond" evidence="1">
    <location>
        <begin position="168"/>
        <end position="173"/>
    </location>
</feature>
<organism>
    <name type="scientific">Rattus norvegicus</name>
    <name type="common">Rat</name>
    <dbReference type="NCBI Taxonomy" id="10116"/>
    <lineage>
        <taxon>Eukaryota</taxon>
        <taxon>Metazoa</taxon>
        <taxon>Chordata</taxon>
        <taxon>Craniata</taxon>
        <taxon>Vertebrata</taxon>
        <taxon>Euteleostomi</taxon>
        <taxon>Mammalia</taxon>
        <taxon>Eutheria</taxon>
        <taxon>Euarchontoglires</taxon>
        <taxon>Glires</taxon>
        <taxon>Rodentia</taxon>
        <taxon>Myomorpha</taxon>
        <taxon>Muroidea</taxon>
        <taxon>Muridae</taxon>
        <taxon>Murinae</taxon>
        <taxon>Rattus</taxon>
    </lineage>
</organism>
<proteinExistence type="evidence at transcript level"/>
<accession>Q9WV41</accession>
<gene>
    <name type="primary">Insl6</name>
</gene>
<comment type="function">
    <text>May have a role in sperm development and fertilization.</text>
</comment>
<comment type="subcellular location">
    <subcellularLocation>
        <location evidence="1">Secreted</location>
    </subcellularLocation>
</comment>
<comment type="tissue specificity">
    <text>Testis and prostate specific.</text>
</comment>
<comment type="similarity">
    <text evidence="3">Belongs to the insulin family.</text>
</comment>
<keyword id="KW-0165">Cleavage on pair of basic residues</keyword>
<keyword id="KW-1015">Disulfide bond</keyword>
<keyword id="KW-0372">Hormone</keyword>
<keyword id="KW-1185">Reference proteome</keyword>
<keyword id="KW-0964">Secreted</keyword>
<keyword id="KW-0732">Signal</keyword>
<evidence type="ECO:0000250" key="1"/>
<evidence type="ECO:0000255" key="2"/>
<evidence type="ECO:0000305" key="3"/>
<name>INSL6_RAT</name>
<protein>
    <recommendedName>
        <fullName>Insulin-like peptide INSL6</fullName>
        <shortName>Insulin-like peptide 6</shortName>
    </recommendedName>
    <component>
        <recommendedName>
            <fullName>Insulin-like peptide INSL6 B chain</fullName>
        </recommendedName>
    </component>
    <component>
        <recommendedName>
            <fullName>Insulin-like peptide INSL6 A chain</fullName>
        </recommendedName>
    </component>
</protein>